<proteinExistence type="evidence at protein level"/>
<organism>
    <name type="scientific">Chlorolobion braunii</name>
    <name type="common">Green alga</name>
    <name type="synonym">Monoraphidium braunii</name>
    <dbReference type="NCBI Taxonomy" id="34112"/>
    <lineage>
        <taxon>Eukaryota</taxon>
        <taxon>Viridiplantae</taxon>
        <taxon>Chlorophyta</taxon>
        <taxon>core chlorophytes</taxon>
        <taxon>Chlorophyceae</taxon>
        <taxon>CS clade</taxon>
        <taxon>Sphaeropleales</taxon>
        <taxon>Selenastraceae</taxon>
        <taxon>Chlorolobion</taxon>
    </lineage>
</organism>
<dbReference type="PIR" id="S35677">
    <property type="entry name" value="S35677"/>
</dbReference>
<dbReference type="PDB" id="1A2S">
    <property type="method" value="NMR"/>
    <property type="chains" value="A=1-89"/>
</dbReference>
<dbReference type="PDB" id="1CED">
    <property type="method" value="NMR"/>
    <property type="chains" value="A=1-89"/>
</dbReference>
<dbReference type="PDB" id="1CTJ">
    <property type="method" value="X-ray"/>
    <property type="resolution" value="1.10 A"/>
    <property type="chains" value="A=1-89"/>
</dbReference>
<dbReference type="PDBsum" id="1A2S"/>
<dbReference type="PDBsum" id="1CED"/>
<dbReference type="PDBsum" id="1CTJ"/>
<dbReference type="SMR" id="Q09099"/>
<dbReference type="EvolutionaryTrace" id="Q09099"/>
<dbReference type="GO" id="GO:0009543">
    <property type="term" value="C:chloroplast thylakoid lumen"/>
    <property type="evidence" value="ECO:0007669"/>
    <property type="project" value="UniProtKB-SubCell"/>
</dbReference>
<dbReference type="GO" id="GO:0009055">
    <property type="term" value="F:electron transfer activity"/>
    <property type="evidence" value="ECO:0007669"/>
    <property type="project" value="InterPro"/>
</dbReference>
<dbReference type="GO" id="GO:0020037">
    <property type="term" value="F:heme binding"/>
    <property type="evidence" value="ECO:0007669"/>
    <property type="project" value="InterPro"/>
</dbReference>
<dbReference type="GO" id="GO:0005506">
    <property type="term" value="F:iron ion binding"/>
    <property type="evidence" value="ECO:0007669"/>
    <property type="project" value="InterPro"/>
</dbReference>
<dbReference type="GO" id="GO:0015979">
    <property type="term" value="P:photosynthesis"/>
    <property type="evidence" value="ECO:0007669"/>
    <property type="project" value="UniProtKB-KW"/>
</dbReference>
<dbReference type="Gene3D" id="1.10.760.10">
    <property type="entry name" value="Cytochrome c-like domain"/>
    <property type="match status" value="1"/>
</dbReference>
<dbReference type="InterPro" id="IPR009056">
    <property type="entry name" value="Cyt_c-like_dom"/>
</dbReference>
<dbReference type="InterPro" id="IPR036909">
    <property type="entry name" value="Cyt_c-like_dom_sf"/>
</dbReference>
<dbReference type="InterPro" id="IPR023655">
    <property type="entry name" value="Cyt_C6"/>
</dbReference>
<dbReference type="InterPro" id="IPR008168">
    <property type="entry name" value="Cyt_C_IC"/>
</dbReference>
<dbReference type="PANTHER" id="PTHR34688">
    <property type="entry name" value="CYTOCHROME C6, CHLOROPLASTIC"/>
    <property type="match status" value="1"/>
</dbReference>
<dbReference type="PANTHER" id="PTHR34688:SF2">
    <property type="entry name" value="CYTOCHROME C6, CHLOROPLASTIC"/>
    <property type="match status" value="1"/>
</dbReference>
<dbReference type="Pfam" id="PF13442">
    <property type="entry name" value="Cytochrome_CBB3"/>
    <property type="match status" value="1"/>
</dbReference>
<dbReference type="PRINTS" id="PR00605">
    <property type="entry name" value="CYTCHROMECIC"/>
</dbReference>
<dbReference type="SUPFAM" id="SSF46626">
    <property type="entry name" value="Cytochrome c"/>
    <property type="match status" value="1"/>
</dbReference>
<dbReference type="PROSITE" id="PS51007">
    <property type="entry name" value="CYTC"/>
    <property type="match status" value="1"/>
</dbReference>
<comment type="function">
    <text>Functions as an electron carrier between membrane-bound cytochrome b6-f and photosystem I in oxygenic photosynthesis.</text>
</comment>
<comment type="biophysicochemical properties">
    <redoxPotential>
        <text>E(0) is +358 mV.</text>
    </redoxPotential>
</comment>
<comment type="subunit">
    <text>Monomer.</text>
</comment>
<comment type="subcellular location">
    <subcellularLocation>
        <location>Plastid</location>
        <location>Chloroplast thylakoid lumen</location>
    </subcellularLocation>
</comment>
<comment type="PTM">
    <text>Binds 1 heme c group covalently per subunit.</text>
</comment>
<comment type="similarity">
    <text evidence="3">Belongs to the cytochrome c family. PetJ subfamily.</text>
</comment>
<gene>
    <name type="primary">petJ</name>
</gene>
<feature type="chain" id="PRO_0000208677" description="Cytochrome c6">
    <location>
        <begin position="1"/>
        <end position="89"/>
    </location>
</feature>
<feature type="binding site" description="covalent" evidence="1 2">
    <location>
        <position position="15"/>
    </location>
    <ligand>
        <name>heme c</name>
        <dbReference type="ChEBI" id="CHEBI:61717"/>
    </ligand>
</feature>
<feature type="binding site" description="covalent" evidence="1 2">
    <location>
        <position position="18"/>
    </location>
    <ligand>
        <name>heme c</name>
        <dbReference type="ChEBI" id="CHEBI:61717"/>
    </ligand>
</feature>
<feature type="binding site" description="axial binding residue" evidence="1 2">
    <location>
        <position position="19"/>
    </location>
    <ligand>
        <name>heme c</name>
        <dbReference type="ChEBI" id="CHEBI:61717"/>
    </ligand>
    <ligandPart>
        <name>Fe</name>
        <dbReference type="ChEBI" id="CHEBI:18248"/>
    </ligandPart>
</feature>
<feature type="binding site" description="axial binding residue" evidence="1 2">
    <location>
        <position position="61"/>
    </location>
    <ligand>
        <name>heme c</name>
        <dbReference type="ChEBI" id="CHEBI:61717"/>
    </ligand>
    <ligandPart>
        <name>Fe</name>
        <dbReference type="ChEBI" id="CHEBI:18248"/>
    </ligandPart>
</feature>
<feature type="helix" evidence="5">
    <location>
        <begin position="4"/>
        <end position="14"/>
    </location>
</feature>
<feature type="helix" evidence="5">
    <location>
        <begin position="16"/>
        <end position="19"/>
    </location>
</feature>
<feature type="helix" evidence="5">
    <location>
        <begin position="20"/>
        <end position="22"/>
    </location>
</feature>
<feature type="strand" evidence="5">
    <location>
        <begin position="25"/>
        <end position="27"/>
    </location>
</feature>
<feature type="helix" evidence="5">
    <location>
        <begin position="34"/>
        <end position="40"/>
    </location>
</feature>
<feature type="helix" evidence="5">
    <location>
        <begin position="47"/>
        <end position="56"/>
    </location>
</feature>
<feature type="strand" evidence="4">
    <location>
        <begin position="59"/>
        <end position="61"/>
    </location>
</feature>
<feature type="turn" evidence="4">
    <location>
        <begin position="65"/>
        <end position="67"/>
    </location>
</feature>
<feature type="helix" evidence="5">
    <location>
        <begin position="70"/>
        <end position="85"/>
    </location>
</feature>
<evidence type="ECO:0000255" key="1">
    <source>
        <dbReference type="PROSITE-ProRule" id="PRU00433"/>
    </source>
</evidence>
<evidence type="ECO:0000269" key="2">
    <source>
    </source>
</evidence>
<evidence type="ECO:0000305" key="3"/>
<evidence type="ECO:0007829" key="4">
    <source>
        <dbReference type="PDB" id="1A2S"/>
    </source>
</evidence>
<evidence type="ECO:0007829" key="5">
    <source>
        <dbReference type="PDB" id="1CTJ"/>
    </source>
</evidence>
<protein>
    <recommendedName>
        <fullName>Cytochrome c6</fullName>
    </recommendedName>
    <alternativeName>
        <fullName>Cytochrome c-552</fullName>
    </alternativeName>
    <alternativeName>
        <fullName>Cytochrome c-553</fullName>
    </alternativeName>
    <alternativeName>
        <fullName>Cytochrome c553</fullName>
    </alternativeName>
    <alternativeName>
        <fullName>Soluble cytochrome f</fullName>
    </alternativeName>
</protein>
<keyword id="KW-0002">3D-structure</keyword>
<keyword id="KW-0150">Chloroplast</keyword>
<keyword id="KW-0903">Direct protein sequencing</keyword>
<keyword id="KW-0249">Electron transport</keyword>
<keyword id="KW-0349">Heme</keyword>
<keyword id="KW-0408">Iron</keyword>
<keyword id="KW-0479">Metal-binding</keyword>
<keyword id="KW-0602">Photosynthesis</keyword>
<keyword id="KW-0934">Plastid</keyword>
<keyword id="KW-0793">Thylakoid</keyword>
<keyword id="KW-0813">Transport</keyword>
<accession>Q09099</accession>
<reference key="1">
    <citation type="journal article" date="1993" name="Eur. J. Biochem.">
        <title>Cytochrome c6 from Monoraphidium braunii. A cytochrome with an unusual heme axial coordination.</title>
        <authorList>
            <person name="Campos A.P."/>
            <person name="Aguiar A.P."/>
            <person name="Hervas M."/>
            <person name="Regalla M."/>
            <person name="Navarro J.A."/>
            <person name="Ortega J.M."/>
            <person name="Xavier A.V."/>
            <person name="de la Rosa M.A."/>
            <person name="Teixeira M."/>
        </authorList>
    </citation>
    <scope>PROTEIN SEQUENCE</scope>
</reference>
<reference key="2">
    <citation type="journal article" date="1995" name="Structure">
        <title>Ab initio determination of the crystal structure of cytochrome c6 and comparison with plastocyanin.</title>
        <authorList>
            <person name="Frazao C."/>
            <person name="Soares C.M."/>
            <person name="Carrondo M.A."/>
            <person name="Pohl E."/>
            <person name="Dauter Z."/>
            <person name="Wilson K.S."/>
            <person name="Hervas M."/>
            <person name="Navarro J.A."/>
            <person name="de la Rosa M.A."/>
            <person name="Sheldrick G.M."/>
        </authorList>
    </citation>
    <scope>X-RAY CRYSTALLOGRAPHY (1.1 ANGSTROMS)</scope>
</reference>
<reference key="3">
    <citation type="journal article" date="1998" name="Biochemistry">
        <title>Solution structure of oxidized cytochrome c6 from the green alga Monoraphidium braunii.</title>
        <authorList>
            <person name="Banci L."/>
            <person name="Bertini I."/>
            <person name="de la Rosa M.A."/>
            <person name="Koulougliotis D."/>
            <person name="Navarro J.A."/>
            <person name="Walter O."/>
        </authorList>
    </citation>
    <scope>STRUCTURE BY NMR</scope>
</reference>
<name>CYC6_CHLBR</name>
<sequence length="89" mass="9352">EADLALGKAVFDGNCAACHAGGGNNVIPDHTLQKAAIEQFLDGGFNIEAIVYQIENGKGAMPAWDGRLDEDEIAGVAAYVYDQAAGNKW</sequence>